<dbReference type="EMBL" id="AP009324">
    <property type="protein sequence ID" value="BAF78020.1"/>
    <property type="molecule type" value="Genomic_DNA"/>
</dbReference>
<dbReference type="RefSeq" id="WP_000390524.1">
    <property type="nucleotide sequence ID" value="NC_009782.1"/>
</dbReference>
<dbReference type="SMR" id="A7X172"/>
<dbReference type="KEGG" id="saw:SAHV_1137"/>
<dbReference type="HOGENOM" id="CLU_014841_3_2_9"/>
<dbReference type="GO" id="GO:0005737">
    <property type="term" value="C:cytoplasm"/>
    <property type="evidence" value="ECO:0007669"/>
    <property type="project" value="UniProtKB-SubCell"/>
</dbReference>
<dbReference type="GO" id="GO:0009380">
    <property type="term" value="C:excinuclease repair complex"/>
    <property type="evidence" value="ECO:0007669"/>
    <property type="project" value="InterPro"/>
</dbReference>
<dbReference type="GO" id="GO:0003677">
    <property type="term" value="F:DNA binding"/>
    <property type="evidence" value="ECO:0007669"/>
    <property type="project" value="UniProtKB-UniRule"/>
</dbReference>
<dbReference type="GO" id="GO:0009381">
    <property type="term" value="F:excinuclease ABC activity"/>
    <property type="evidence" value="ECO:0007669"/>
    <property type="project" value="UniProtKB-UniRule"/>
</dbReference>
<dbReference type="GO" id="GO:0006289">
    <property type="term" value="P:nucleotide-excision repair"/>
    <property type="evidence" value="ECO:0007669"/>
    <property type="project" value="UniProtKB-UniRule"/>
</dbReference>
<dbReference type="GO" id="GO:0009432">
    <property type="term" value="P:SOS response"/>
    <property type="evidence" value="ECO:0007669"/>
    <property type="project" value="UniProtKB-UniRule"/>
</dbReference>
<dbReference type="CDD" id="cd10434">
    <property type="entry name" value="GIY-YIG_UvrC_Cho"/>
    <property type="match status" value="1"/>
</dbReference>
<dbReference type="FunFam" id="3.30.420.340:FF:000002">
    <property type="entry name" value="UvrABC system protein C"/>
    <property type="match status" value="1"/>
</dbReference>
<dbReference type="FunFam" id="3.40.1440.10:FF:000001">
    <property type="entry name" value="UvrABC system protein C"/>
    <property type="match status" value="1"/>
</dbReference>
<dbReference type="FunFam" id="4.10.860.10:FF:000007">
    <property type="entry name" value="UvrABC system protein C"/>
    <property type="match status" value="1"/>
</dbReference>
<dbReference type="Gene3D" id="1.10.150.20">
    <property type="entry name" value="5' to 3' exonuclease, C-terminal subdomain"/>
    <property type="match status" value="1"/>
</dbReference>
<dbReference type="Gene3D" id="3.40.1440.10">
    <property type="entry name" value="GIY-YIG endonuclease"/>
    <property type="match status" value="1"/>
</dbReference>
<dbReference type="Gene3D" id="4.10.860.10">
    <property type="entry name" value="UVR domain"/>
    <property type="match status" value="1"/>
</dbReference>
<dbReference type="Gene3D" id="3.30.420.340">
    <property type="entry name" value="UvrC, RNAse H endonuclease domain"/>
    <property type="match status" value="1"/>
</dbReference>
<dbReference type="HAMAP" id="MF_00203">
    <property type="entry name" value="UvrC"/>
    <property type="match status" value="1"/>
</dbReference>
<dbReference type="InterPro" id="IPR000305">
    <property type="entry name" value="GIY-YIG_endonuc"/>
</dbReference>
<dbReference type="InterPro" id="IPR035901">
    <property type="entry name" value="GIY-YIG_endonuc_sf"/>
</dbReference>
<dbReference type="InterPro" id="IPR047296">
    <property type="entry name" value="GIY-YIG_UvrC_Cho"/>
</dbReference>
<dbReference type="InterPro" id="IPR010994">
    <property type="entry name" value="RuvA_2-like"/>
</dbReference>
<dbReference type="InterPro" id="IPR001943">
    <property type="entry name" value="UVR_dom"/>
</dbReference>
<dbReference type="InterPro" id="IPR036876">
    <property type="entry name" value="UVR_dom_sf"/>
</dbReference>
<dbReference type="InterPro" id="IPR050066">
    <property type="entry name" value="UvrABC_protein_C"/>
</dbReference>
<dbReference type="InterPro" id="IPR004791">
    <property type="entry name" value="UvrC"/>
</dbReference>
<dbReference type="InterPro" id="IPR001162">
    <property type="entry name" value="UvrC_RNase_H_dom"/>
</dbReference>
<dbReference type="InterPro" id="IPR038476">
    <property type="entry name" value="UvrC_RNase_H_dom_sf"/>
</dbReference>
<dbReference type="NCBIfam" id="TIGR00194">
    <property type="entry name" value="uvrC"/>
    <property type="match status" value="1"/>
</dbReference>
<dbReference type="PANTHER" id="PTHR30562:SF1">
    <property type="entry name" value="UVRABC SYSTEM PROTEIN C"/>
    <property type="match status" value="1"/>
</dbReference>
<dbReference type="PANTHER" id="PTHR30562">
    <property type="entry name" value="UVRC/OXIDOREDUCTASE"/>
    <property type="match status" value="1"/>
</dbReference>
<dbReference type="Pfam" id="PF01541">
    <property type="entry name" value="GIY-YIG"/>
    <property type="match status" value="1"/>
</dbReference>
<dbReference type="Pfam" id="PF02151">
    <property type="entry name" value="UVR"/>
    <property type="match status" value="1"/>
</dbReference>
<dbReference type="Pfam" id="PF22920">
    <property type="entry name" value="UvrC_RNaseH"/>
    <property type="match status" value="1"/>
</dbReference>
<dbReference type="Pfam" id="PF08459">
    <property type="entry name" value="UvrC_RNaseH_dom"/>
    <property type="match status" value="1"/>
</dbReference>
<dbReference type="SMART" id="SM00465">
    <property type="entry name" value="GIYc"/>
    <property type="match status" value="1"/>
</dbReference>
<dbReference type="SUPFAM" id="SSF46600">
    <property type="entry name" value="C-terminal UvrC-binding domain of UvrB"/>
    <property type="match status" value="1"/>
</dbReference>
<dbReference type="SUPFAM" id="SSF82771">
    <property type="entry name" value="GIY-YIG endonuclease"/>
    <property type="match status" value="1"/>
</dbReference>
<dbReference type="SUPFAM" id="SSF47781">
    <property type="entry name" value="RuvA domain 2-like"/>
    <property type="match status" value="1"/>
</dbReference>
<dbReference type="PROSITE" id="PS50164">
    <property type="entry name" value="GIY_YIG"/>
    <property type="match status" value="1"/>
</dbReference>
<dbReference type="PROSITE" id="PS50151">
    <property type="entry name" value="UVR"/>
    <property type="match status" value="1"/>
</dbReference>
<dbReference type="PROSITE" id="PS50165">
    <property type="entry name" value="UVRC"/>
    <property type="match status" value="1"/>
</dbReference>
<organism>
    <name type="scientific">Staphylococcus aureus (strain Mu3 / ATCC 700698)</name>
    <dbReference type="NCBI Taxonomy" id="418127"/>
    <lineage>
        <taxon>Bacteria</taxon>
        <taxon>Bacillati</taxon>
        <taxon>Bacillota</taxon>
        <taxon>Bacilli</taxon>
        <taxon>Bacillales</taxon>
        <taxon>Staphylococcaceae</taxon>
        <taxon>Staphylococcus</taxon>
    </lineage>
</organism>
<evidence type="ECO:0000255" key="1">
    <source>
        <dbReference type="HAMAP-Rule" id="MF_00203"/>
    </source>
</evidence>
<name>UVRC_STAA1</name>
<proteinExistence type="inferred from homology"/>
<gene>
    <name evidence="1" type="primary">uvrC</name>
    <name type="ordered locus">SAHV_1137</name>
</gene>
<reference key="1">
    <citation type="journal article" date="2008" name="Antimicrob. Agents Chemother.">
        <title>Mutated response regulator graR is responsible for phenotypic conversion of Staphylococcus aureus from heterogeneous vancomycin-intermediate resistance to vancomycin-intermediate resistance.</title>
        <authorList>
            <person name="Neoh H.-M."/>
            <person name="Cui L."/>
            <person name="Yuzawa H."/>
            <person name="Takeuchi F."/>
            <person name="Matsuo M."/>
            <person name="Hiramatsu K."/>
        </authorList>
    </citation>
    <scope>NUCLEOTIDE SEQUENCE [LARGE SCALE GENOMIC DNA]</scope>
    <source>
        <strain>Mu3 / ATCC 700698</strain>
    </source>
</reference>
<accession>A7X172</accession>
<protein>
    <recommendedName>
        <fullName evidence="1">UvrABC system protein C</fullName>
        <shortName evidence="1">Protein UvrC</shortName>
    </recommendedName>
    <alternativeName>
        <fullName evidence="1">Excinuclease ABC subunit C</fullName>
    </alternativeName>
</protein>
<feature type="chain" id="PRO_1000077845" description="UvrABC system protein C">
    <location>
        <begin position="1"/>
        <end position="593"/>
    </location>
</feature>
<feature type="domain" description="GIY-YIG" evidence="1">
    <location>
        <begin position="17"/>
        <end position="94"/>
    </location>
</feature>
<feature type="domain" description="UVR" evidence="1">
    <location>
        <begin position="199"/>
        <end position="234"/>
    </location>
</feature>
<sequence>MEDYKQRIKNKLNVVPMEPGCYLMKDRNDQVIYVGKAKKLRNRLRSYFTGAHDAKTTRLVGEIRRFEFIVTSSETESLLLELNLIKQYQPRYNILLKDDKSYPFIKITKEKYPRLLVTRTVKQGTGKYFGPYPNAYSAQETKKLLDRIYPYRKCDKMPDKLCLYYHIGQCLGPCVYDVDLSKYAQMTKEITDFLNGEDKTILKSLEERMLTASESLDFERAKEYRDLIQHIQNLTNKQKIMSSDKTIRDVFGYCVDKGWMCIQVFFIRQGNMIKRDTTMIPLQQTEEEEFYTFIGQFYSLNQHILPKEVHVPRNLDKEMIQSVVDTKIVQPARGPKKDMVDLAAHNAKVSLNNKFELISRDESRTIKAIEELGTQMGIQTPIRIEAFDNSNIQGVDPVSAMVTFVDGKPDKKNYRKYKIKTVKGPDDYKSMREVVRRRYSRVLNEGLPLPDLIIVDGGKGHMNGVIDVLQNELGLDIPVAGLQKNDKHQTSELLYGASAEIVPLKKNSQAFYLLHRIQDEVHRFAITFHRQTRQKTGLKSILDDIDGIGNKRKTLLLRSFGSIKKMKEATLEDFKNIGIPENVAKNLHEQLHK</sequence>
<comment type="function">
    <text evidence="1">The UvrABC repair system catalyzes the recognition and processing of DNA lesions. UvrC both incises the 5' and 3' sides of the lesion. The N-terminal half is responsible for the 3' incision and the C-terminal half is responsible for the 5' incision.</text>
</comment>
<comment type="subunit">
    <text evidence="1">Interacts with UvrB in an incision complex.</text>
</comment>
<comment type="subcellular location">
    <subcellularLocation>
        <location evidence="1">Cytoplasm</location>
    </subcellularLocation>
</comment>
<comment type="similarity">
    <text evidence="1">Belongs to the UvrC family.</text>
</comment>
<keyword id="KW-0963">Cytoplasm</keyword>
<keyword id="KW-0227">DNA damage</keyword>
<keyword id="KW-0228">DNA excision</keyword>
<keyword id="KW-0234">DNA repair</keyword>
<keyword id="KW-0267">Excision nuclease</keyword>
<keyword id="KW-0742">SOS response</keyword>